<accession>B7MCS9</accession>
<feature type="chain" id="PRO_1000140960" description="Small ribosomal subunit protein uS3">
    <location>
        <begin position="1"/>
        <end position="233"/>
    </location>
</feature>
<feature type="domain" description="KH type-2" evidence="1">
    <location>
        <begin position="39"/>
        <end position="107"/>
    </location>
</feature>
<comment type="function">
    <text evidence="1">Binds the lower part of the 30S subunit head. Binds mRNA in the 70S ribosome, positioning it for translation.</text>
</comment>
<comment type="subunit">
    <text evidence="1">Part of the 30S ribosomal subunit. Forms a tight complex with proteins S10 and S14.</text>
</comment>
<comment type="similarity">
    <text evidence="1">Belongs to the universal ribosomal protein uS3 family.</text>
</comment>
<evidence type="ECO:0000255" key="1">
    <source>
        <dbReference type="HAMAP-Rule" id="MF_01309"/>
    </source>
</evidence>
<evidence type="ECO:0000305" key="2"/>
<proteinExistence type="inferred from homology"/>
<gene>
    <name evidence="1" type="primary">rpsC</name>
    <name type="ordered locus">ECS88_3701</name>
</gene>
<sequence>MGQKVHPNGIRLGIVKPWNSTWFANTKEFADNLDSDFKVRQYLTKELAKASVSRIVIERPAKSIRVTIHTARPGIVIGKKGEDVEKLRKVVADIAGVPAQINIAEVRKPELDAKLVADSITSQLERRVMFRRAMKRAVQNAMRLGAKGIKVEVSGRLGGAEIARTEWYREGRVPLHTLRADIDYNTSEAHTTYGVIGVKVWIFKGEILGGMAAVEQPEKPAAQPKKQQRKGRK</sequence>
<reference key="1">
    <citation type="journal article" date="2009" name="PLoS Genet.">
        <title>Organised genome dynamics in the Escherichia coli species results in highly diverse adaptive paths.</title>
        <authorList>
            <person name="Touchon M."/>
            <person name="Hoede C."/>
            <person name="Tenaillon O."/>
            <person name="Barbe V."/>
            <person name="Baeriswyl S."/>
            <person name="Bidet P."/>
            <person name="Bingen E."/>
            <person name="Bonacorsi S."/>
            <person name="Bouchier C."/>
            <person name="Bouvet O."/>
            <person name="Calteau A."/>
            <person name="Chiapello H."/>
            <person name="Clermont O."/>
            <person name="Cruveiller S."/>
            <person name="Danchin A."/>
            <person name="Diard M."/>
            <person name="Dossat C."/>
            <person name="Karoui M.E."/>
            <person name="Frapy E."/>
            <person name="Garry L."/>
            <person name="Ghigo J.M."/>
            <person name="Gilles A.M."/>
            <person name="Johnson J."/>
            <person name="Le Bouguenec C."/>
            <person name="Lescat M."/>
            <person name="Mangenot S."/>
            <person name="Martinez-Jehanne V."/>
            <person name="Matic I."/>
            <person name="Nassif X."/>
            <person name="Oztas S."/>
            <person name="Petit M.A."/>
            <person name="Pichon C."/>
            <person name="Rouy Z."/>
            <person name="Ruf C.S."/>
            <person name="Schneider D."/>
            <person name="Tourret J."/>
            <person name="Vacherie B."/>
            <person name="Vallenet D."/>
            <person name="Medigue C."/>
            <person name="Rocha E.P.C."/>
            <person name="Denamur E."/>
        </authorList>
    </citation>
    <scope>NUCLEOTIDE SEQUENCE [LARGE SCALE GENOMIC DNA]</scope>
    <source>
        <strain>S88 / ExPEC</strain>
    </source>
</reference>
<dbReference type="EMBL" id="CU928161">
    <property type="protein sequence ID" value="CAR04918.1"/>
    <property type="molecule type" value="Genomic_DNA"/>
</dbReference>
<dbReference type="RefSeq" id="WP_000529945.1">
    <property type="nucleotide sequence ID" value="NC_011742.1"/>
</dbReference>
<dbReference type="EMDB" id="EMD-20056"/>
<dbReference type="EMDB" id="EMD-20057"/>
<dbReference type="EMDB" id="EMD-20058"/>
<dbReference type="EMDB" id="EMD-20121"/>
<dbReference type="EMDB" id="EMD-21468"/>
<dbReference type="EMDB" id="EMD-21469"/>
<dbReference type="EMDB" id="EMD-21470"/>
<dbReference type="EMDB" id="EMD-21471"/>
<dbReference type="EMDB" id="EMD-21472"/>
<dbReference type="EMDB" id="EMD-21474"/>
<dbReference type="EMDB" id="EMD-21475"/>
<dbReference type="EMDB" id="EMD-21476"/>
<dbReference type="EMDB" id="EMD-21482"/>
<dbReference type="EMDB" id="EMD-21485"/>
<dbReference type="EMDB" id="EMD-21494"/>
<dbReference type="EMDB" id="EMD-22082"/>
<dbReference type="EMDB" id="EMD-22084"/>
<dbReference type="EMDB" id="EMD-22087"/>
<dbReference type="EMDB" id="EMD-22107"/>
<dbReference type="EMDB" id="EMD-22141"/>
<dbReference type="EMDB" id="EMD-22142"/>
<dbReference type="EMDB" id="EMD-22181"/>
<dbReference type="EMDB" id="EMD-22192"/>
<dbReference type="EMDB" id="EMD-22193"/>
<dbReference type="EMDB" id="EMD-22586"/>
<dbReference type="EMDB" id="EMD-24800"/>
<dbReference type="EMDB" id="EMD-24801"/>
<dbReference type="EMDB" id="EMD-24802"/>
<dbReference type="EMDB" id="EMD-24804"/>
<dbReference type="EMDB" id="EMD-24944"/>
<dbReference type="EMDB" id="EMD-26486"/>
<dbReference type="EMDB" id="EMD-28165"/>
<dbReference type="EMDB" id="EMD-28197"/>
<dbReference type="EMDB" id="EMD-28254"/>
<dbReference type="EMDB" id="EMD-28692"/>
<dbReference type="EMDB" id="EMD-28720"/>
<dbReference type="EMDB" id="EMD-29214"/>
<dbReference type="EMDB" id="EMD-29449"/>
<dbReference type="EMDB" id="EMD-29620"/>
<dbReference type="EMDB" id="EMD-29621"/>
<dbReference type="EMDB" id="EMD-29624"/>
<dbReference type="EMDB" id="EMD-29627"/>
<dbReference type="EMDB" id="EMD-29628"/>
<dbReference type="EMDB" id="EMD-29631"/>
<dbReference type="EMDB" id="EMD-29634"/>
<dbReference type="EMDB" id="EMD-29786"/>
<dbReference type="EMDB" id="EMD-29819"/>
<dbReference type="EMDB" id="EMD-29820"/>
<dbReference type="EMDB" id="EMD-29821"/>
<dbReference type="EMDB" id="EMD-29822"/>
<dbReference type="EMDB" id="EMD-40882"/>
<dbReference type="EMDB" id="EMD-42453"/>
<dbReference type="EMDB" id="EMD-42454"/>
<dbReference type="EMDB" id="EMD-42473"/>
<dbReference type="EMDB" id="EMD-42474"/>
<dbReference type="EMDB" id="EMD-42477"/>
<dbReference type="EMDB" id="EMD-42479"/>
<dbReference type="EMDB" id="EMD-42492"/>
<dbReference type="EMDB" id="EMD-42493"/>
<dbReference type="EMDB" id="EMD-42503"/>
<dbReference type="EMDB" id="EMD-42504"/>
<dbReference type="EMDB" id="EMD-43490"/>
<dbReference type="EMDB" id="EMD-43491"/>
<dbReference type="EMDB" id="EMD-43929"/>
<dbReference type="EMDB" id="EMD-45569"/>
<dbReference type="EMDB" id="EMD-45572"/>
<dbReference type="EMDB" id="EMD-45573"/>
<dbReference type="EMDB" id="EMD-47168"/>
<dbReference type="EMDB" id="EMD-47169"/>
<dbReference type="EMDB" id="EMD-48479"/>
<dbReference type="EMDB" id="EMD-48513"/>
<dbReference type="EMDB" id="EMD-7014"/>
<dbReference type="EMDB" id="EMD-7015"/>
<dbReference type="EMDB" id="EMD-7016"/>
<dbReference type="EMDB" id="EMD-7970"/>
<dbReference type="EMDB" id="EMD-8521"/>
<dbReference type="EMDB" id="EMD-8522"/>
<dbReference type="EMDB" id="EMD-8621"/>
<dbReference type="EMDB" id="EMD-8826"/>
<dbReference type="EMDB" id="EMD-8829"/>
<dbReference type="SMR" id="B7MCS9"/>
<dbReference type="IntAct" id="B7MCS9">
    <property type="interactions" value="2"/>
</dbReference>
<dbReference type="GeneID" id="97603663"/>
<dbReference type="KEGG" id="ecz:ECS88_3701"/>
<dbReference type="HOGENOM" id="CLU_058591_0_2_6"/>
<dbReference type="Proteomes" id="UP000000747">
    <property type="component" value="Chromosome"/>
</dbReference>
<dbReference type="GO" id="GO:0022627">
    <property type="term" value="C:cytosolic small ribosomal subunit"/>
    <property type="evidence" value="ECO:0007669"/>
    <property type="project" value="TreeGrafter"/>
</dbReference>
<dbReference type="GO" id="GO:0003729">
    <property type="term" value="F:mRNA binding"/>
    <property type="evidence" value="ECO:0007669"/>
    <property type="project" value="UniProtKB-UniRule"/>
</dbReference>
<dbReference type="GO" id="GO:0019843">
    <property type="term" value="F:rRNA binding"/>
    <property type="evidence" value="ECO:0007669"/>
    <property type="project" value="UniProtKB-UniRule"/>
</dbReference>
<dbReference type="GO" id="GO:0003735">
    <property type="term" value="F:structural constituent of ribosome"/>
    <property type="evidence" value="ECO:0007669"/>
    <property type="project" value="InterPro"/>
</dbReference>
<dbReference type="GO" id="GO:0006412">
    <property type="term" value="P:translation"/>
    <property type="evidence" value="ECO:0007669"/>
    <property type="project" value="UniProtKB-UniRule"/>
</dbReference>
<dbReference type="CDD" id="cd02412">
    <property type="entry name" value="KH-II_30S_S3"/>
    <property type="match status" value="1"/>
</dbReference>
<dbReference type="FunFam" id="3.30.1140.32:FF:000001">
    <property type="entry name" value="30S ribosomal protein S3"/>
    <property type="match status" value="1"/>
</dbReference>
<dbReference type="FunFam" id="3.30.300.20:FF:000001">
    <property type="entry name" value="30S ribosomal protein S3"/>
    <property type="match status" value="1"/>
</dbReference>
<dbReference type="Gene3D" id="3.30.300.20">
    <property type="match status" value="1"/>
</dbReference>
<dbReference type="Gene3D" id="3.30.1140.32">
    <property type="entry name" value="Ribosomal protein S3, C-terminal domain"/>
    <property type="match status" value="1"/>
</dbReference>
<dbReference type="HAMAP" id="MF_01309_B">
    <property type="entry name" value="Ribosomal_uS3_B"/>
    <property type="match status" value="1"/>
</dbReference>
<dbReference type="InterPro" id="IPR004087">
    <property type="entry name" value="KH_dom"/>
</dbReference>
<dbReference type="InterPro" id="IPR015946">
    <property type="entry name" value="KH_dom-like_a/b"/>
</dbReference>
<dbReference type="InterPro" id="IPR004044">
    <property type="entry name" value="KH_dom_type_2"/>
</dbReference>
<dbReference type="InterPro" id="IPR009019">
    <property type="entry name" value="KH_sf_prok-type"/>
</dbReference>
<dbReference type="InterPro" id="IPR036419">
    <property type="entry name" value="Ribosomal_S3_C_sf"/>
</dbReference>
<dbReference type="InterPro" id="IPR005704">
    <property type="entry name" value="Ribosomal_uS3_bac-typ"/>
</dbReference>
<dbReference type="InterPro" id="IPR001351">
    <property type="entry name" value="Ribosomal_uS3_C"/>
</dbReference>
<dbReference type="InterPro" id="IPR018280">
    <property type="entry name" value="Ribosomal_uS3_CS"/>
</dbReference>
<dbReference type="NCBIfam" id="TIGR01009">
    <property type="entry name" value="rpsC_bact"/>
    <property type="match status" value="1"/>
</dbReference>
<dbReference type="PANTHER" id="PTHR11760">
    <property type="entry name" value="30S/40S RIBOSOMAL PROTEIN S3"/>
    <property type="match status" value="1"/>
</dbReference>
<dbReference type="PANTHER" id="PTHR11760:SF19">
    <property type="entry name" value="SMALL RIBOSOMAL SUBUNIT PROTEIN US3C"/>
    <property type="match status" value="1"/>
</dbReference>
<dbReference type="Pfam" id="PF07650">
    <property type="entry name" value="KH_2"/>
    <property type="match status" value="1"/>
</dbReference>
<dbReference type="Pfam" id="PF00189">
    <property type="entry name" value="Ribosomal_S3_C"/>
    <property type="match status" value="1"/>
</dbReference>
<dbReference type="SMART" id="SM00322">
    <property type="entry name" value="KH"/>
    <property type="match status" value="1"/>
</dbReference>
<dbReference type="SUPFAM" id="SSF54814">
    <property type="entry name" value="Prokaryotic type KH domain (KH-domain type II)"/>
    <property type="match status" value="1"/>
</dbReference>
<dbReference type="SUPFAM" id="SSF54821">
    <property type="entry name" value="Ribosomal protein S3 C-terminal domain"/>
    <property type="match status" value="1"/>
</dbReference>
<dbReference type="PROSITE" id="PS50823">
    <property type="entry name" value="KH_TYPE_2"/>
    <property type="match status" value="1"/>
</dbReference>
<dbReference type="PROSITE" id="PS00548">
    <property type="entry name" value="RIBOSOMAL_S3"/>
    <property type="match status" value="1"/>
</dbReference>
<keyword id="KW-1185">Reference proteome</keyword>
<keyword id="KW-0687">Ribonucleoprotein</keyword>
<keyword id="KW-0689">Ribosomal protein</keyword>
<keyword id="KW-0694">RNA-binding</keyword>
<keyword id="KW-0699">rRNA-binding</keyword>
<organism>
    <name type="scientific">Escherichia coli O45:K1 (strain S88 / ExPEC)</name>
    <dbReference type="NCBI Taxonomy" id="585035"/>
    <lineage>
        <taxon>Bacteria</taxon>
        <taxon>Pseudomonadati</taxon>
        <taxon>Pseudomonadota</taxon>
        <taxon>Gammaproteobacteria</taxon>
        <taxon>Enterobacterales</taxon>
        <taxon>Enterobacteriaceae</taxon>
        <taxon>Escherichia</taxon>
    </lineage>
</organism>
<protein>
    <recommendedName>
        <fullName evidence="1">Small ribosomal subunit protein uS3</fullName>
    </recommendedName>
    <alternativeName>
        <fullName evidence="2">30S ribosomal protein S3</fullName>
    </alternativeName>
</protein>
<name>RS3_ECO45</name>